<evidence type="ECO:0000255" key="1">
    <source>
        <dbReference type="HAMAP-Rule" id="MF_00120"/>
    </source>
</evidence>
<protein>
    <recommendedName>
        <fullName evidence="1">Glutamyl-tRNA(Gln) amidotransferase subunit A</fullName>
        <shortName evidence="1">Glu-ADT subunit A</shortName>
        <ecNumber evidence="1">6.3.5.7</ecNumber>
    </recommendedName>
</protein>
<dbReference type="EC" id="6.3.5.7" evidence="1"/>
<dbReference type="EMBL" id="CP001489">
    <property type="protein sequence ID" value="ACO02398.1"/>
    <property type="molecule type" value="Genomic_DNA"/>
</dbReference>
<dbReference type="RefSeq" id="WP_004686070.1">
    <property type="nucleotide sequence ID" value="NC_012442.1"/>
</dbReference>
<dbReference type="SMR" id="C0RLB5"/>
<dbReference type="KEGG" id="bmi:BMEA_B0569"/>
<dbReference type="HOGENOM" id="CLU_009600_0_3_5"/>
<dbReference type="Proteomes" id="UP000001748">
    <property type="component" value="Chromosome II"/>
</dbReference>
<dbReference type="GO" id="GO:0030956">
    <property type="term" value="C:glutamyl-tRNA(Gln) amidotransferase complex"/>
    <property type="evidence" value="ECO:0007669"/>
    <property type="project" value="InterPro"/>
</dbReference>
<dbReference type="GO" id="GO:0005524">
    <property type="term" value="F:ATP binding"/>
    <property type="evidence" value="ECO:0007669"/>
    <property type="project" value="UniProtKB-KW"/>
</dbReference>
<dbReference type="GO" id="GO:0050567">
    <property type="term" value="F:glutaminyl-tRNA synthase (glutamine-hydrolyzing) activity"/>
    <property type="evidence" value="ECO:0007669"/>
    <property type="project" value="UniProtKB-UniRule"/>
</dbReference>
<dbReference type="GO" id="GO:0006412">
    <property type="term" value="P:translation"/>
    <property type="evidence" value="ECO:0007669"/>
    <property type="project" value="UniProtKB-UniRule"/>
</dbReference>
<dbReference type="Gene3D" id="3.90.1300.10">
    <property type="entry name" value="Amidase signature (AS) domain"/>
    <property type="match status" value="1"/>
</dbReference>
<dbReference type="HAMAP" id="MF_00120">
    <property type="entry name" value="GatA"/>
    <property type="match status" value="1"/>
</dbReference>
<dbReference type="InterPro" id="IPR000120">
    <property type="entry name" value="Amidase"/>
</dbReference>
<dbReference type="InterPro" id="IPR020556">
    <property type="entry name" value="Amidase_CS"/>
</dbReference>
<dbReference type="InterPro" id="IPR023631">
    <property type="entry name" value="Amidase_dom"/>
</dbReference>
<dbReference type="InterPro" id="IPR036928">
    <property type="entry name" value="AS_sf"/>
</dbReference>
<dbReference type="InterPro" id="IPR004412">
    <property type="entry name" value="GatA"/>
</dbReference>
<dbReference type="NCBIfam" id="TIGR00132">
    <property type="entry name" value="gatA"/>
    <property type="match status" value="1"/>
</dbReference>
<dbReference type="PANTHER" id="PTHR11895:SF151">
    <property type="entry name" value="GLUTAMYL-TRNA(GLN) AMIDOTRANSFERASE SUBUNIT A"/>
    <property type="match status" value="1"/>
</dbReference>
<dbReference type="PANTHER" id="PTHR11895">
    <property type="entry name" value="TRANSAMIDASE"/>
    <property type="match status" value="1"/>
</dbReference>
<dbReference type="Pfam" id="PF01425">
    <property type="entry name" value="Amidase"/>
    <property type="match status" value="1"/>
</dbReference>
<dbReference type="SUPFAM" id="SSF75304">
    <property type="entry name" value="Amidase signature (AS) enzymes"/>
    <property type="match status" value="1"/>
</dbReference>
<dbReference type="PROSITE" id="PS00571">
    <property type="entry name" value="AMIDASES"/>
    <property type="match status" value="1"/>
</dbReference>
<name>GATA_BRUMB</name>
<gene>
    <name evidence="1" type="primary">gatA</name>
    <name type="ordered locus">BMEA_B0569</name>
</gene>
<accession>C0RLB5</accession>
<organism>
    <name type="scientific">Brucella melitensis biotype 2 (strain ATCC 23457)</name>
    <dbReference type="NCBI Taxonomy" id="546272"/>
    <lineage>
        <taxon>Bacteria</taxon>
        <taxon>Pseudomonadati</taxon>
        <taxon>Pseudomonadota</taxon>
        <taxon>Alphaproteobacteria</taxon>
        <taxon>Hyphomicrobiales</taxon>
        <taxon>Brucellaceae</taxon>
        <taxon>Brucella/Ochrobactrum group</taxon>
        <taxon>Brucella</taxon>
    </lineage>
</organism>
<sequence length="493" mass="52489">MSELTALTIAEARDKLKAKAITATELTDAYLSAIDAANDAINAYVAVTHDQARSMAKASDERIAKGEAGALEGIPLGVKDLFATKGVHTQACSHILDGFKPEYESTVTANLWADGAVMLGKLNMDEFAMGSSNETSYYGPVKNPWRAKGSNADLVPGGSSGGSAAAVAAHLCAGATATDTGGSIRQPAAFTGTVGIKPTYGRVSRWGTVAFASSLDQAGPIARDVRDAAILMKSMASLDLKDTTSVDLPVPDYEAALGRSVKGMKIGIPREYRVDGMPGEIEELWQKGIQYLKDAGAEIVDISLPHTKYALPAYYIVAPAEASSNLARYDGVRYGLRVPGKDIADMYEQTRAAGFGKEVKRRIMIGTYVLSAGYYDAYYLRAQKVRTLIKKDFEDVFAKGVDAILTPATPSAAFSLADEVLANDPVKMYLNDIFTVIVNMAGLPGIAVPAGLNGQGLPLGLQLIGRPFEEETLFQAAHVIEQAAGRFTPAKWW</sequence>
<feature type="chain" id="PRO_1000122469" description="Glutamyl-tRNA(Gln) amidotransferase subunit A">
    <location>
        <begin position="1"/>
        <end position="493"/>
    </location>
</feature>
<feature type="active site" description="Charge relay system" evidence="1">
    <location>
        <position position="79"/>
    </location>
</feature>
<feature type="active site" description="Charge relay system" evidence="1">
    <location>
        <position position="159"/>
    </location>
</feature>
<feature type="active site" description="Acyl-ester intermediate" evidence="1">
    <location>
        <position position="183"/>
    </location>
</feature>
<keyword id="KW-0067">ATP-binding</keyword>
<keyword id="KW-0436">Ligase</keyword>
<keyword id="KW-0547">Nucleotide-binding</keyword>
<keyword id="KW-0648">Protein biosynthesis</keyword>
<proteinExistence type="inferred from homology"/>
<comment type="function">
    <text evidence="1">Allows the formation of correctly charged Gln-tRNA(Gln) through the transamidation of misacylated Glu-tRNA(Gln) in organisms which lack glutaminyl-tRNA synthetase. The reaction takes place in the presence of glutamine and ATP through an activated gamma-phospho-Glu-tRNA(Gln).</text>
</comment>
<comment type="catalytic activity">
    <reaction evidence="1">
        <text>L-glutamyl-tRNA(Gln) + L-glutamine + ATP + H2O = L-glutaminyl-tRNA(Gln) + L-glutamate + ADP + phosphate + H(+)</text>
        <dbReference type="Rhea" id="RHEA:17521"/>
        <dbReference type="Rhea" id="RHEA-COMP:9681"/>
        <dbReference type="Rhea" id="RHEA-COMP:9684"/>
        <dbReference type="ChEBI" id="CHEBI:15377"/>
        <dbReference type="ChEBI" id="CHEBI:15378"/>
        <dbReference type="ChEBI" id="CHEBI:29985"/>
        <dbReference type="ChEBI" id="CHEBI:30616"/>
        <dbReference type="ChEBI" id="CHEBI:43474"/>
        <dbReference type="ChEBI" id="CHEBI:58359"/>
        <dbReference type="ChEBI" id="CHEBI:78520"/>
        <dbReference type="ChEBI" id="CHEBI:78521"/>
        <dbReference type="ChEBI" id="CHEBI:456216"/>
        <dbReference type="EC" id="6.3.5.7"/>
    </reaction>
</comment>
<comment type="subunit">
    <text evidence="1">Heterotrimer of A, B and C subunits.</text>
</comment>
<comment type="similarity">
    <text evidence="1">Belongs to the amidase family. GatA subfamily.</text>
</comment>
<reference key="1">
    <citation type="submission" date="2009-03" db="EMBL/GenBank/DDBJ databases">
        <title>Brucella melitensis ATCC 23457 whole genome shotgun sequencing project.</title>
        <authorList>
            <person name="Setubal J.C."/>
            <person name="Boyle S."/>
            <person name="Crasta O.R."/>
            <person name="Gillespie J.J."/>
            <person name="Kenyon R.W."/>
            <person name="Lu J."/>
            <person name="Mane S."/>
            <person name="Nagrani S."/>
            <person name="Shallom J.M."/>
            <person name="Shallom S."/>
            <person name="Shukla M."/>
            <person name="Snyder E.E."/>
            <person name="Sobral B.W."/>
            <person name="Wattam A.R."/>
            <person name="Will R."/>
            <person name="Williams K."/>
            <person name="Yoo H."/>
            <person name="Munk C."/>
            <person name="Tapia R."/>
            <person name="Han C."/>
            <person name="Detter J.C."/>
            <person name="Bruce D."/>
            <person name="Brettin T.S."/>
        </authorList>
    </citation>
    <scope>NUCLEOTIDE SEQUENCE [LARGE SCALE GENOMIC DNA]</scope>
    <source>
        <strain>ATCC 23457</strain>
    </source>
</reference>